<name>RL30_ONYPE</name>
<dbReference type="EMBL" id="AP006628">
    <property type="protein sequence ID" value="BAD04303.1"/>
    <property type="molecule type" value="Genomic_DNA"/>
</dbReference>
<dbReference type="SMR" id="Q6YR04"/>
<dbReference type="STRING" id="262768.PAM_218"/>
<dbReference type="KEGG" id="poy:PAM_218"/>
<dbReference type="eggNOG" id="COG1841">
    <property type="taxonomic scope" value="Bacteria"/>
</dbReference>
<dbReference type="HOGENOM" id="CLU_131047_2_0_14"/>
<dbReference type="BioCyc" id="OYEL262768:G1G26-264-MONOMER"/>
<dbReference type="Proteomes" id="UP000002523">
    <property type="component" value="Chromosome"/>
</dbReference>
<dbReference type="GO" id="GO:0022625">
    <property type="term" value="C:cytosolic large ribosomal subunit"/>
    <property type="evidence" value="ECO:0007669"/>
    <property type="project" value="TreeGrafter"/>
</dbReference>
<dbReference type="GO" id="GO:0003735">
    <property type="term" value="F:structural constituent of ribosome"/>
    <property type="evidence" value="ECO:0007669"/>
    <property type="project" value="InterPro"/>
</dbReference>
<dbReference type="GO" id="GO:0006412">
    <property type="term" value="P:translation"/>
    <property type="evidence" value="ECO:0007669"/>
    <property type="project" value="InterPro"/>
</dbReference>
<dbReference type="CDD" id="cd01658">
    <property type="entry name" value="Ribosomal_L30"/>
    <property type="match status" value="1"/>
</dbReference>
<dbReference type="Gene3D" id="3.30.1390.20">
    <property type="entry name" value="Ribosomal protein L30, ferredoxin-like fold domain"/>
    <property type="match status" value="1"/>
</dbReference>
<dbReference type="HAMAP" id="MF_01371_B">
    <property type="entry name" value="Ribosomal_uL30_B"/>
    <property type="match status" value="1"/>
</dbReference>
<dbReference type="InterPro" id="IPR036919">
    <property type="entry name" value="Ribo_uL30_ferredoxin-like_sf"/>
</dbReference>
<dbReference type="InterPro" id="IPR005996">
    <property type="entry name" value="Ribosomal_uL30_bac-type"/>
</dbReference>
<dbReference type="InterPro" id="IPR016082">
    <property type="entry name" value="Ribosomal_uL30_ferredoxin-like"/>
</dbReference>
<dbReference type="NCBIfam" id="TIGR01308">
    <property type="entry name" value="rpmD_bact"/>
    <property type="match status" value="1"/>
</dbReference>
<dbReference type="PANTHER" id="PTHR15892:SF2">
    <property type="entry name" value="LARGE RIBOSOMAL SUBUNIT PROTEIN UL30M"/>
    <property type="match status" value="1"/>
</dbReference>
<dbReference type="PANTHER" id="PTHR15892">
    <property type="entry name" value="MITOCHONDRIAL RIBOSOMAL PROTEIN L30"/>
    <property type="match status" value="1"/>
</dbReference>
<dbReference type="Pfam" id="PF00327">
    <property type="entry name" value="Ribosomal_L30"/>
    <property type="match status" value="1"/>
</dbReference>
<dbReference type="PIRSF" id="PIRSF002211">
    <property type="entry name" value="Ribosomal_L30_bac-type"/>
    <property type="match status" value="1"/>
</dbReference>
<dbReference type="SUPFAM" id="SSF55129">
    <property type="entry name" value="Ribosomal protein L30p/L7e"/>
    <property type="match status" value="1"/>
</dbReference>
<protein>
    <recommendedName>
        <fullName evidence="1">Large ribosomal subunit protein uL30</fullName>
    </recommendedName>
    <alternativeName>
        <fullName evidence="2">50S ribosomal protein L30</fullName>
    </alternativeName>
</protein>
<evidence type="ECO:0000255" key="1">
    <source>
        <dbReference type="HAMAP-Rule" id="MF_01371"/>
    </source>
</evidence>
<evidence type="ECO:0000305" key="2"/>
<gene>
    <name evidence="1" type="primary">rpmD</name>
    <name type="ordered locus">PAM_218</name>
</gene>
<feature type="chain" id="PRO_0000347127" description="Large ribosomal subunit protein uL30">
    <location>
        <begin position="1"/>
        <end position="65"/>
    </location>
</feature>
<organism>
    <name type="scientific">Onion yellows phytoplasma (strain OY-M)</name>
    <dbReference type="NCBI Taxonomy" id="262768"/>
    <lineage>
        <taxon>Bacteria</taxon>
        <taxon>Bacillati</taxon>
        <taxon>Mycoplasmatota</taxon>
        <taxon>Mollicutes</taxon>
        <taxon>Acholeplasmatales</taxon>
        <taxon>Acholeplasmataceae</taxon>
        <taxon>Candidatus Phytoplasma</taxon>
        <taxon>16SrI (Aster yellows group)</taxon>
    </lineage>
</organism>
<reference key="1">
    <citation type="journal article" date="2004" name="Nat. Genet.">
        <title>Reductive evolution suggested from the complete genome sequence of a plant-pathogenic phytoplasma.</title>
        <authorList>
            <person name="Oshima K."/>
            <person name="Kakizawa S."/>
            <person name="Nishigawa H."/>
            <person name="Jung H.-Y."/>
            <person name="Wei W."/>
            <person name="Suzuki S."/>
            <person name="Arashida R."/>
            <person name="Nakata D."/>
            <person name="Miyata S."/>
            <person name="Ugaki M."/>
            <person name="Namba S."/>
        </authorList>
    </citation>
    <scope>NUCLEOTIDE SEQUENCE [LARGE SCALE GENOMIC DNA]</scope>
    <source>
        <strain>OY-M</strain>
    </source>
</reference>
<comment type="subunit">
    <text evidence="1">Part of the 50S ribosomal subunit.</text>
</comment>
<comment type="similarity">
    <text evidence="1">Belongs to the universal ribosomal protein uL30 family.</text>
</comment>
<keyword id="KW-0687">Ribonucleoprotein</keyword>
<keyword id="KW-0689">Ribosomal protein</keyword>
<accession>Q6YR04</accession>
<proteinExistence type="inferred from homology"/>
<sequence length="65" mass="7266">MKLKITLTKSLIACRVNQIKTAHCLGLKKINNQVIKDDTPAIHGMIKTISHLVVVEKVSDTKEQK</sequence>